<reference key="1">
    <citation type="journal article" date="1992" name="Proc. Natl. Acad. Sci. U.S.A.">
        <title>Evolutionary conservation pattern of zinc-finger domains of Drosophila segmentation genes.</title>
        <authorList>
            <person name="Sommer R.J."/>
            <person name="Retzlaff M."/>
            <person name="Goerlich K."/>
            <person name="Sander K."/>
            <person name="Tautz D."/>
        </authorList>
    </citation>
    <scope>NUCLEOTIDE SEQUENCE [GENOMIC DNA]</scope>
</reference>
<comment type="subcellular location">
    <subcellularLocation>
        <location evidence="2">Nucleus</location>
    </subcellularLocation>
</comment>
<comment type="similarity">
    <text evidence="2">Belongs to the snail C2H2-type zinc-finger protein family.</text>
</comment>
<sequence>HIAHHTLPCKCPICGKPFAPWLLQGHIRTHTGESPSVCQHCNRAFA</sequence>
<dbReference type="EMBL" id="L01599">
    <property type="protein sequence ID" value="AAA29281.1"/>
    <property type="molecule type" value="Genomic_DNA"/>
</dbReference>
<dbReference type="SMR" id="Q02025"/>
<dbReference type="GO" id="GO:0005634">
    <property type="term" value="C:nucleus"/>
    <property type="evidence" value="ECO:0007669"/>
    <property type="project" value="UniProtKB-SubCell"/>
</dbReference>
<dbReference type="GO" id="GO:0000981">
    <property type="term" value="F:DNA-binding transcription factor activity, RNA polymerase II-specific"/>
    <property type="evidence" value="ECO:0007669"/>
    <property type="project" value="TreeGrafter"/>
</dbReference>
<dbReference type="GO" id="GO:0000978">
    <property type="term" value="F:RNA polymerase II cis-regulatory region sequence-specific DNA binding"/>
    <property type="evidence" value="ECO:0007669"/>
    <property type="project" value="TreeGrafter"/>
</dbReference>
<dbReference type="GO" id="GO:0008270">
    <property type="term" value="F:zinc ion binding"/>
    <property type="evidence" value="ECO:0007669"/>
    <property type="project" value="UniProtKB-KW"/>
</dbReference>
<dbReference type="FunFam" id="3.30.160.60:FF:000043">
    <property type="entry name" value="Scratch family zinc finger 2"/>
    <property type="match status" value="1"/>
</dbReference>
<dbReference type="Gene3D" id="3.30.160.60">
    <property type="entry name" value="Classic Zinc Finger"/>
    <property type="match status" value="1"/>
</dbReference>
<dbReference type="InterPro" id="IPR050527">
    <property type="entry name" value="Snail/Krueppel_Znf"/>
</dbReference>
<dbReference type="InterPro" id="IPR036236">
    <property type="entry name" value="Znf_C2H2_sf"/>
</dbReference>
<dbReference type="InterPro" id="IPR013087">
    <property type="entry name" value="Znf_C2H2_type"/>
</dbReference>
<dbReference type="PANTHER" id="PTHR24388:SF54">
    <property type="entry name" value="PROTEIN ESCARGOT"/>
    <property type="match status" value="1"/>
</dbReference>
<dbReference type="PANTHER" id="PTHR24388">
    <property type="entry name" value="ZINC FINGER PROTEIN"/>
    <property type="match status" value="1"/>
</dbReference>
<dbReference type="Pfam" id="PF00096">
    <property type="entry name" value="zf-C2H2"/>
    <property type="match status" value="1"/>
</dbReference>
<dbReference type="Pfam" id="PF13913">
    <property type="entry name" value="zf-C2HC_2"/>
    <property type="match status" value="1"/>
</dbReference>
<dbReference type="SUPFAM" id="SSF57667">
    <property type="entry name" value="beta-beta-alpha zinc fingers"/>
    <property type="match status" value="1"/>
</dbReference>
<dbReference type="PROSITE" id="PS50157">
    <property type="entry name" value="ZINC_FINGER_C2H2_2"/>
    <property type="match status" value="1"/>
</dbReference>
<accession>Q02025</accession>
<organism>
    <name type="scientific">Lithobius forficatus</name>
    <name type="common">Centipede</name>
    <name type="synonym">Scolopendra forficatus</name>
    <dbReference type="NCBI Taxonomy" id="3396457"/>
    <lineage>
        <taxon>Eukaryota</taxon>
        <taxon>Metazoa</taxon>
        <taxon>Ecdysozoa</taxon>
        <taxon>Arthropoda</taxon>
        <taxon>Myriapoda</taxon>
        <taxon>Chilopoda</taxon>
        <taxon>Pleurostigmophora</taxon>
        <taxon>Lithobiomorpha</taxon>
        <taxon>Lithobiidae</taxon>
        <taxon>Lithobius</taxon>
    </lineage>
</organism>
<feature type="chain" id="PRO_0000047043" description="Escargot/snail protein homolog">
    <location>
        <begin position="1" status="less than"/>
        <end position="46" status="greater than"/>
    </location>
</feature>
<feature type="zinc finger region" description="C2H2-type 1" evidence="1">
    <location>
        <begin position="1" status="less than"/>
        <end position="4"/>
    </location>
</feature>
<feature type="zinc finger region" description="C2H2-type 2" evidence="1">
    <location>
        <begin position="9"/>
        <end position="30"/>
    </location>
</feature>
<feature type="zinc finger region" description="C2H2-type 3" evidence="1">
    <location>
        <begin position="36"/>
        <end position="46" status="greater than"/>
    </location>
</feature>
<feature type="non-terminal residue">
    <location>
        <position position="1"/>
    </location>
</feature>
<feature type="non-terminal residue">
    <location>
        <position position="46"/>
    </location>
</feature>
<keyword id="KW-0238">DNA-binding</keyword>
<keyword id="KW-0479">Metal-binding</keyword>
<keyword id="KW-0539">Nucleus</keyword>
<keyword id="KW-0677">Repeat</keyword>
<keyword id="KW-0862">Zinc</keyword>
<keyword id="KW-0863">Zinc-finger</keyword>
<name>ESCA_LITFO</name>
<proteinExistence type="inferred from homology"/>
<protein>
    <recommendedName>
        <fullName>Escargot/snail protein homolog</fullName>
    </recommendedName>
</protein>
<evidence type="ECO:0000255" key="1">
    <source>
        <dbReference type="PROSITE-ProRule" id="PRU00042"/>
    </source>
</evidence>
<evidence type="ECO:0000305" key="2"/>